<reference key="1">
    <citation type="submission" date="2007-06" db="EMBL/GenBank/DDBJ databases">
        <title>Complete sequence of Marinomonas sp. MWYL1.</title>
        <authorList>
            <consortium name="US DOE Joint Genome Institute"/>
            <person name="Copeland A."/>
            <person name="Lucas S."/>
            <person name="Lapidus A."/>
            <person name="Barry K."/>
            <person name="Glavina del Rio T."/>
            <person name="Dalin E."/>
            <person name="Tice H."/>
            <person name="Pitluck S."/>
            <person name="Kiss H."/>
            <person name="Brettin T."/>
            <person name="Bruce D."/>
            <person name="Detter J.C."/>
            <person name="Han C."/>
            <person name="Schmutz J."/>
            <person name="Larimer F."/>
            <person name="Land M."/>
            <person name="Hauser L."/>
            <person name="Kyrpides N."/>
            <person name="Kim E."/>
            <person name="Johnston A.W.B."/>
            <person name="Todd J.D."/>
            <person name="Rogers R."/>
            <person name="Wexler M."/>
            <person name="Bond P.L."/>
            <person name="Li Y."/>
            <person name="Richardson P."/>
        </authorList>
    </citation>
    <scope>NUCLEOTIDE SEQUENCE [LARGE SCALE GENOMIC DNA]</scope>
    <source>
        <strain>MWYL1</strain>
    </source>
</reference>
<organism>
    <name type="scientific">Marinomonas sp. (strain MWYL1)</name>
    <dbReference type="NCBI Taxonomy" id="400668"/>
    <lineage>
        <taxon>Bacteria</taxon>
        <taxon>Pseudomonadati</taxon>
        <taxon>Pseudomonadota</taxon>
        <taxon>Gammaproteobacteria</taxon>
        <taxon>Oceanospirillales</taxon>
        <taxon>Oceanospirillaceae</taxon>
        <taxon>Marinomonas</taxon>
    </lineage>
</organism>
<accession>A6W1R4</accession>
<keyword id="KW-0963">Cytoplasm</keyword>
<keyword id="KW-0489">Methyltransferase</keyword>
<keyword id="KW-0545">Nucleotide biosynthesis</keyword>
<keyword id="KW-0808">Transferase</keyword>
<proteinExistence type="inferred from homology"/>
<dbReference type="EC" id="2.1.1.45" evidence="1"/>
<dbReference type="EMBL" id="CP000749">
    <property type="protein sequence ID" value="ABR72643.1"/>
    <property type="molecule type" value="Genomic_DNA"/>
</dbReference>
<dbReference type="SMR" id="A6W1R4"/>
<dbReference type="STRING" id="400668.Mmwyl1_3742"/>
<dbReference type="KEGG" id="mmw:Mmwyl1_3742"/>
<dbReference type="eggNOG" id="COG0207">
    <property type="taxonomic scope" value="Bacteria"/>
</dbReference>
<dbReference type="HOGENOM" id="CLU_021669_0_1_6"/>
<dbReference type="OrthoDB" id="9774633at2"/>
<dbReference type="UniPathway" id="UPA00575"/>
<dbReference type="GO" id="GO:0005829">
    <property type="term" value="C:cytosol"/>
    <property type="evidence" value="ECO:0007669"/>
    <property type="project" value="TreeGrafter"/>
</dbReference>
<dbReference type="GO" id="GO:0004799">
    <property type="term" value="F:thymidylate synthase activity"/>
    <property type="evidence" value="ECO:0007669"/>
    <property type="project" value="UniProtKB-UniRule"/>
</dbReference>
<dbReference type="GO" id="GO:0006231">
    <property type="term" value="P:dTMP biosynthetic process"/>
    <property type="evidence" value="ECO:0007669"/>
    <property type="project" value="UniProtKB-UniRule"/>
</dbReference>
<dbReference type="GO" id="GO:0006235">
    <property type="term" value="P:dTTP biosynthetic process"/>
    <property type="evidence" value="ECO:0007669"/>
    <property type="project" value="UniProtKB-UniRule"/>
</dbReference>
<dbReference type="GO" id="GO:0032259">
    <property type="term" value="P:methylation"/>
    <property type="evidence" value="ECO:0007669"/>
    <property type="project" value="UniProtKB-KW"/>
</dbReference>
<dbReference type="CDD" id="cd00351">
    <property type="entry name" value="TS_Pyrimidine_HMase"/>
    <property type="match status" value="1"/>
</dbReference>
<dbReference type="Gene3D" id="3.30.572.10">
    <property type="entry name" value="Thymidylate synthase/dCMP hydroxymethylase domain"/>
    <property type="match status" value="1"/>
</dbReference>
<dbReference type="HAMAP" id="MF_00008">
    <property type="entry name" value="Thymidy_synth_bact"/>
    <property type="match status" value="1"/>
</dbReference>
<dbReference type="InterPro" id="IPR045097">
    <property type="entry name" value="Thymidate_synth/dCMP_Mease"/>
</dbReference>
<dbReference type="InterPro" id="IPR023451">
    <property type="entry name" value="Thymidate_synth/dCMP_Mease_dom"/>
</dbReference>
<dbReference type="InterPro" id="IPR036926">
    <property type="entry name" value="Thymidate_synth/dCMP_Mease_sf"/>
</dbReference>
<dbReference type="InterPro" id="IPR000398">
    <property type="entry name" value="Thymidylate_synthase"/>
</dbReference>
<dbReference type="InterPro" id="IPR020940">
    <property type="entry name" value="Thymidylate_synthase_AS"/>
</dbReference>
<dbReference type="NCBIfam" id="NF002498">
    <property type="entry name" value="PRK01827.1-4"/>
    <property type="match status" value="1"/>
</dbReference>
<dbReference type="NCBIfam" id="TIGR03284">
    <property type="entry name" value="thym_sym"/>
    <property type="match status" value="1"/>
</dbReference>
<dbReference type="PANTHER" id="PTHR11548:SF9">
    <property type="entry name" value="THYMIDYLATE SYNTHASE"/>
    <property type="match status" value="1"/>
</dbReference>
<dbReference type="PANTHER" id="PTHR11548">
    <property type="entry name" value="THYMIDYLATE SYNTHASE 1"/>
    <property type="match status" value="1"/>
</dbReference>
<dbReference type="Pfam" id="PF00303">
    <property type="entry name" value="Thymidylat_synt"/>
    <property type="match status" value="1"/>
</dbReference>
<dbReference type="PRINTS" id="PR00108">
    <property type="entry name" value="THYMDSNTHASE"/>
</dbReference>
<dbReference type="SUPFAM" id="SSF55831">
    <property type="entry name" value="Thymidylate synthase/dCMP hydroxymethylase"/>
    <property type="match status" value="1"/>
</dbReference>
<dbReference type="PROSITE" id="PS00091">
    <property type="entry name" value="THYMIDYLATE_SYNTHASE"/>
    <property type="match status" value="1"/>
</dbReference>
<name>TYSY_MARMS</name>
<sequence length="283" mass="32366">MKQYLDLCNRIVNEGEWVSNERTGKRCLTVINADLTYDVSKGEFPLVTTRKSYWKSAIAEIIGYLRGYDNAADFRALGTKTWDANANENEVWLNSPYRKGEDDMGLCYGAIGRNFPKPDGGHIDLLKQIIDDLSRGVDNRGEILTFYHPGAFHMACLRPCMYSHHFSLLGDTLYLNSTQRSCDVPLGLNFNMVQVYVLLAIVAQITGKKPGKAFHKIVNAHIYEDQLELMRDVQLKREPYPLPTLKINPEIKSLKDIETWVTMDDFEIEGYQFHEPIAYPFSV</sequence>
<comment type="function">
    <text evidence="1">Catalyzes the reductive methylation of 2'-deoxyuridine-5'-monophosphate (dUMP) to 2'-deoxythymidine-5'-monophosphate (dTMP) while utilizing 5,10-methylenetetrahydrofolate (mTHF) as the methyl donor and reductant in the reaction, yielding dihydrofolate (DHF) as a by-product. This enzymatic reaction provides an intracellular de novo source of dTMP, an essential precursor for DNA biosynthesis.</text>
</comment>
<comment type="catalytic activity">
    <reaction evidence="1">
        <text>dUMP + (6R)-5,10-methylene-5,6,7,8-tetrahydrofolate = 7,8-dihydrofolate + dTMP</text>
        <dbReference type="Rhea" id="RHEA:12104"/>
        <dbReference type="ChEBI" id="CHEBI:15636"/>
        <dbReference type="ChEBI" id="CHEBI:57451"/>
        <dbReference type="ChEBI" id="CHEBI:63528"/>
        <dbReference type="ChEBI" id="CHEBI:246422"/>
        <dbReference type="EC" id="2.1.1.45"/>
    </reaction>
</comment>
<comment type="pathway">
    <text evidence="1">Pyrimidine metabolism; dTTP biosynthesis.</text>
</comment>
<comment type="subunit">
    <text evidence="1">Homodimer.</text>
</comment>
<comment type="subcellular location">
    <subcellularLocation>
        <location evidence="1">Cytoplasm</location>
    </subcellularLocation>
</comment>
<comment type="similarity">
    <text evidence="1">Belongs to the thymidylate synthase family. Bacterial-type ThyA subfamily.</text>
</comment>
<evidence type="ECO:0000255" key="1">
    <source>
        <dbReference type="HAMAP-Rule" id="MF_00008"/>
    </source>
</evidence>
<feature type="chain" id="PRO_1000073878" description="Thymidylate synthase">
    <location>
        <begin position="1"/>
        <end position="283"/>
    </location>
</feature>
<feature type="active site" description="Nucleophile" evidence="1">
    <location>
        <position position="160"/>
    </location>
</feature>
<feature type="binding site" evidence="1">
    <location>
        <position position="22"/>
    </location>
    <ligand>
        <name>dUMP</name>
        <dbReference type="ChEBI" id="CHEBI:246422"/>
    </ligand>
</feature>
<feature type="binding site" evidence="1">
    <location>
        <begin position="180"/>
        <end position="183"/>
    </location>
    <ligand>
        <name>dUMP</name>
        <dbReference type="ChEBI" id="CHEBI:246422"/>
    </ligand>
</feature>
<feature type="binding site" evidence="1">
    <location>
        <position position="183"/>
    </location>
    <ligand>
        <name>(6R)-5,10-methylene-5,6,7,8-tetrahydrofolate</name>
        <dbReference type="ChEBI" id="CHEBI:15636"/>
    </ligand>
</feature>
<feature type="binding site" evidence="1">
    <location>
        <position position="191"/>
    </location>
    <ligand>
        <name>dUMP</name>
        <dbReference type="ChEBI" id="CHEBI:246422"/>
    </ligand>
</feature>
<feature type="binding site" evidence="1">
    <location>
        <begin position="221"/>
        <end position="223"/>
    </location>
    <ligand>
        <name>dUMP</name>
        <dbReference type="ChEBI" id="CHEBI:246422"/>
    </ligand>
</feature>
<feature type="binding site" evidence="1">
    <location>
        <position position="282"/>
    </location>
    <ligand>
        <name>(6R)-5,10-methylene-5,6,7,8-tetrahydrofolate</name>
        <dbReference type="ChEBI" id="CHEBI:15636"/>
    </ligand>
</feature>
<gene>
    <name evidence="1" type="primary">thyA</name>
    <name type="ordered locus">Mmwyl1_3742</name>
</gene>
<protein>
    <recommendedName>
        <fullName evidence="1">Thymidylate synthase</fullName>
        <shortName evidence="1">TS</shortName>
        <shortName evidence="1">TSase</shortName>
        <ecNumber evidence="1">2.1.1.45</ecNumber>
    </recommendedName>
</protein>